<name>PG099_MONPV</name>
<keyword id="KW-1015">Disulfide bond</keyword>
<keyword id="KW-1169">Fusion of virus membrane with host cell membrane</keyword>
<keyword id="KW-1168">Fusion of virus membrane with host membrane</keyword>
<keyword id="KW-0426">Late protein</keyword>
<keyword id="KW-0472">Membrane</keyword>
<keyword id="KW-1185">Reference proteome</keyword>
<keyword id="KW-0735">Signal-anchor</keyword>
<keyword id="KW-0812">Transmembrane</keyword>
<keyword id="KW-1133">Transmembrane helix</keyword>
<keyword id="KW-0261">Viral envelope protein</keyword>
<keyword id="KW-1162">Viral penetration into host cytoplasm</keyword>
<keyword id="KW-0946">Virion</keyword>
<keyword id="KW-1160">Virus entry into host cell</keyword>
<organismHost>
    <name type="scientific">Cynomys gunnisoni</name>
    <name type="common">Gunnison's prairie dog</name>
    <name type="synonym">Spermophilus gunnisoni</name>
    <dbReference type="NCBI Taxonomy" id="45479"/>
</organismHost>
<organismHost>
    <name type="scientific">Cynomys leucurus</name>
    <name type="common">White-tailed prairie dog</name>
    <dbReference type="NCBI Taxonomy" id="99825"/>
</organismHost>
<organismHost>
    <name type="scientific">Cynomys ludovicianus</name>
    <name type="common">Black-tailed prairie dog</name>
    <dbReference type="NCBI Taxonomy" id="45480"/>
</organismHost>
<organismHost>
    <name type="scientific">Cynomys mexicanus</name>
    <name type="common">Mexican prairie dog</name>
    <dbReference type="NCBI Taxonomy" id="99826"/>
</organismHost>
<organismHost>
    <name type="scientific">Cynomys parvidens</name>
    <name type="common">Utah prairie dog</name>
    <dbReference type="NCBI Taxonomy" id="99827"/>
</organismHost>
<organismHost>
    <name type="scientific">Gliridae</name>
    <name type="common">dormice</name>
    <dbReference type="NCBI Taxonomy" id="30650"/>
</organismHost>
<organismHost>
    <name type="scientific">Heliosciurus ruwenzorii</name>
    <name type="common">Ruwenzori sun squirrel</name>
    <dbReference type="NCBI Taxonomy" id="226685"/>
</organismHost>
<organismHost>
    <name type="scientific">Homo sapiens</name>
    <name type="common">Human</name>
    <dbReference type="NCBI Taxonomy" id="9606"/>
</organismHost>
<organismHost>
    <name type="scientific">Mus musculus</name>
    <name type="common">Mouse</name>
    <dbReference type="NCBI Taxonomy" id="10090"/>
</organismHost>
<comment type="function">
    <text evidence="1">Component of the entry fusion complex (EFC), which consists of 11 proteins. During cell infection, this complex mediates entry of the virion core into the host cytoplasm by a two-step mechanism consisting of lipid mixing of the viral and cellular membranes and subsequent pore formation.</text>
</comment>
<comment type="subunit">
    <text evidence="1">Interacts with OPG086. Component of the entry fusion complex (EFC) composed of OPG053, OPG076, OPG086, OPG094, OPG095, OPG099, OPG107, OPG143, OPG104J5, OPG147 and OPG155. Except for OPG095 and OPG053, each of the EFC proteins is required for assembly or stability of the complex.</text>
</comment>
<comment type="subcellular location">
    <subcellularLocation>
        <location evidence="1">Virion membrane</location>
        <topology evidence="1">Single-pass type III membrane protein</topology>
    </subcellularLocation>
    <text evidence="1">Component of the mature virion (MV) membrane. The mature virion is located in the cytoplasm of infected cells and is probably released by cell lysis.</text>
</comment>
<comment type="induction">
    <text evidence="1">Expressed in the late phase of the viral replicative cycle.</text>
</comment>
<comment type="PTM">
    <text evidence="1">Most cysteines are linked by disulfide bonds. They are created by the viral disulfide bond formation pathway, a poxvirus-specific redox pathway that operates on the cytoplasmic side of the MV membranes.</text>
</comment>
<comment type="PTM">
    <text evidence="1">Unglycosylated because produced in viral factories instead of the classic ER -Golgi route.</text>
</comment>
<comment type="similarity">
    <text evidence="3">Belongs to the orthopoxvirus OPG099 family.</text>
</comment>
<sequence length="128" mass="15026">MENVPNVYFNPVFIEPTFKHSLLSVYKHRLIVLFEVFVVFILIYVFFRSELNMFFMPKRKIPDPIDRLRRANLACEDDKLMIYGLPWITTQTSALSINSKPIVYKDCAKLLRSINGSQPVSLNDVLRR</sequence>
<proteinExistence type="inferred from homology"/>
<dbReference type="EMBL" id="KC257461">
    <property type="protein sequence ID" value="AGF36988.1"/>
    <property type="molecule type" value="Genomic_DNA"/>
</dbReference>
<dbReference type="EMBL" id="MT903340">
    <property type="protein sequence ID" value="QNP12954.1"/>
    <property type="molecule type" value="Genomic_DNA"/>
</dbReference>
<dbReference type="RefSeq" id="NP_536511.1">
    <property type="nucleotide sequence ID" value="NC_003310.1"/>
</dbReference>
<dbReference type="RefSeq" id="YP_010377081.1">
    <property type="nucleotide sequence ID" value="NC_063383.1"/>
</dbReference>
<dbReference type="SMR" id="A0A7H0DN71"/>
<dbReference type="GeneID" id="72551494"/>
<dbReference type="GeneID" id="928942"/>
<dbReference type="KEGG" id="vg:928942"/>
<dbReference type="Proteomes" id="UP000516359">
    <property type="component" value="Genome"/>
</dbReference>
<dbReference type="GO" id="GO:0016020">
    <property type="term" value="C:membrane"/>
    <property type="evidence" value="ECO:0007669"/>
    <property type="project" value="UniProtKB-KW"/>
</dbReference>
<dbReference type="GO" id="GO:0019031">
    <property type="term" value="C:viral envelope"/>
    <property type="evidence" value="ECO:0007669"/>
    <property type="project" value="UniProtKB-KW"/>
</dbReference>
<dbReference type="GO" id="GO:0055036">
    <property type="term" value="C:virion membrane"/>
    <property type="evidence" value="ECO:0007669"/>
    <property type="project" value="UniProtKB-SubCell"/>
</dbReference>
<dbReference type="GO" id="GO:0019064">
    <property type="term" value="P:fusion of virus membrane with host plasma membrane"/>
    <property type="evidence" value="ECO:0007669"/>
    <property type="project" value="UniProtKB-KW"/>
</dbReference>
<dbReference type="GO" id="GO:0046718">
    <property type="term" value="P:symbiont entry into host cell"/>
    <property type="evidence" value="ECO:0007669"/>
    <property type="project" value="UniProtKB-KW"/>
</dbReference>
<dbReference type="InterPro" id="IPR006956">
    <property type="entry name" value="Poxvirus_L5"/>
</dbReference>
<dbReference type="Pfam" id="PF04872">
    <property type="entry name" value="Pox_L5"/>
    <property type="match status" value="1"/>
</dbReference>
<accession>A0A7H0DN71</accession>
<organism>
    <name type="scientific">Monkeypox virus</name>
    <dbReference type="NCBI Taxonomy" id="10244"/>
    <lineage>
        <taxon>Viruses</taxon>
        <taxon>Varidnaviria</taxon>
        <taxon>Bamfordvirae</taxon>
        <taxon>Nucleocytoviricota</taxon>
        <taxon>Pokkesviricetes</taxon>
        <taxon>Chitovirales</taxon>
        <taxon>Poxviridae</taxon>
        <taxon>Chordopoxvirinae</taxon>
        <taxon>Orthopoxvirus</taxon>
    </lineage>
</organism>
<evidence type="ECO:0000250" key="1">
    <source>
        <dbReference type="UniProtKB" id="P68623"/>
    </source>
</evidence>
<evidence type="ECO:0000255" key="2"/>
<evidence type="ECO:0000305" key="3"/>
<feature type="chain" id="PRO_0000457646" description="Entry-fusion complex protein OPG094">
    <location>
        <begin position="1"/>
        <end position="128"/>
    </location>
</feature>
<feature type="topological domain" description="Intravirion" evidence="2">
    <location>
        <begin position="1"/>
        <end position="30"/>
    </location>
</feature>
<feature type="transmembrane region" description="Helical; Signal-anchor for type III membrane protein" evidence="2">
    <location>
        <begin position="31"/>
        <end position="51"/>
    </location>
</feature>
<feature type="topological domain" description="Virion surface" evidence="2">
    <location>
        <begin position="52"/>
        <end position="128"/>
    </location>
</feature>
<feature type="disulfide bond" description="By viral enzyme" evidence="1">
    <location>
        <begin position="75"/>
        <end position="107"/>
    </location>
</feature>
<reference key="1">
    <citation type="journal article" date="2013" name="Am. J. Trop. Med. Hyg.">
        <title>Detection of human monkeypox in the republic of the congo following intensive community education.</title>
        <authorList>
            <person name="Reynolds M.G."/>
            <person name="Emerson G.L."/>
            <person name="Pukuta E."/>
            <person name="Karhemere S."/>
            <person name="Muyembe J.J."/>
            <person name="Bikindou A."/>
            <person name="McCollum A.M."/>
            <person name="Moses C."/>
            <person name="Wilkins K."/>
            <person name="Zhao H."/>
            <person name="Damon I.K."/>
            <person name="Karem K.L."/>
            <person name="Li Y."/>
            <person name="Carroll D.S."/>
            <person name="Mombouli J.V."/>
        </authorList>
    </citation>
    <scope>NUCLEOTIDE SEQUENCE</scope>
    <source>
        <strain>ROC2010</strain>
    </source>
</reference>
<reference key="2">
    <citation type="journal article" date="2022" name="J. Infect. Dis.">
        <title>Exportation of Monkeypox virus from the African continent.</title>
        <authorList>
            <person name="Mauldin M.R."/>
            <person name="McCollum A.M."/>
            <person name="Nakazawa Y.J."/>
            <person name="Mandra A."/>
            <person name="Whitehouse E.R."/>
            <person name="Davidson W."/>
            <person name="Zhao H."/>
            <person name="Gao J."/>
            <person name="Li Y."/>
            <person name="Doty J."/>
            <person name="Yinka-Ogunleye A."/>
            <person name="Akinpelu A."/>
            <person name="Aruna O."/>
            <person name="Naidoo D."/>
            <person name="Lewandowski K."/>
            <person name="Afrough B."/>
            <person name="Graham V."/>
            <person name="Aarons E."/>
            <person name="Hewson R."/>
            <person name="Vipond R."/>
            <person name="Dunning J."/>
            <person name="Chand M."/>
            <person name="Brown C."/>
            <person name="Cohen-Gihon I."/>
            <person name="Erez N."/>
            <person name="Shifman O."/>
            <person name="Israeli O."/>
            <person name="Sharon M."/>
            <person name="Schwartz E."/>
            <person name="Beth-Din A."/>
            <person name="Zvi A."/>
            <person name="Mak T.M."/>
            <person name="Ng Y.K."/>
            <person name="Cui L."/>
            <person name="Lin R.T.P."/>
            <person name="Olson V.A."/>
            <person name="Brooks T."/>
            <person name="Paran N."/>
            <person name="Ihekweazu C."/>
            <person name="Reynolds M.G."/>
        </authorList>
    </citation>
    <scope>NUCLEOTIDE SEQUENCE [LARGE SCALE GENOMIC DNA]</scope>
    <source>
        <strain>MPXV-M5312_HM12_Rivers</strain>
    </source>
</reference>
<protein>
    <recommendedName>
        <fullName>Entry-fusion complex protein OPG094</fullName>
        <shortName>EFC protein OPG094</shortName>
    </recommendedName>
    <alternativeName>
        <fullName>Protein L5</fullName>
    </alternativeName>
</protein>
<gene>
    <name type="primary">OPG099</name>
    <name type="ORF">MPXVgp084</name>
</gene>